<dbReference type="EMBL" id="CP000750">
    <property type="protein sequence ID" value="ABS02177.1"/>
    <property type="molecule type" value="Genomic_DNA"/>
</dbReference>
<dbReference type="RefSeq" id="WP_012084981.1">
    <property type="nucleotide sequence ID" value="NC_009664.2"/>
</dbReference>
<dbReference type="SMR" id="A6W5T8"/>
<dbReference type="STRING" id="266940.Krad_0688"/>
<dbReference type="KEGG" id="kra:Krad_0688"/>
<dbReference type="eggNOG" id="COG0087">
    <property type="taxonomic scope" value="Bacteria"/>
</dbReference>
<dbReference type="HOGENOM" id="CLU_044142_4_1_11"/>
<dbReference type="OrthoDB" id="9806135at2"/>
<dbReference type="Proteomes" id="UP000001116">
    <property type="component" value="Chromosome"/>
</dbReference>
<dbReference type="GO" id="GO:0022625">
    <property type="term" value="C:cytosolic large ribosomal subunit"/>
    <property type="evidence" value="ECO:0007669"/>
    <property type="project" value="TreeGrafter"/>
</dbReference>
<dbReference type="GO" id="GO:0019843">
    <property type="term" value="F:rRNA binding"/>
    <property type="evidence" value="ECO:0007669"/>
    <property type="project" value="UniProtKB-UniRule"/>
</dbReference>
<dbReference type="GO" id="GO:0003735">
    <property type="term" value="F:structural constituent of ribosome"/>
    <property type="evidence" value="ECO:0007669"/>
    <property type="project" value="InterPro"/>
</dbReference>
<dbReference type="GO" id="GO:0006412">
    <property type="term" value="P:translation"/>
    <property type="evidence" value="ECO:0007669"/>
    <property type="project" value="UniProtKB-UniRule"/>
</dbReference>
<dbReference type="FunFam" id="2.40.30.10:FF:000004">
    <property type="entry name" value="50S ribosomal protein L3"/>
    <property type="match status" value="1"/>
</dbReference>
<dbReference type="FunFam" id="3.30.160.810:FF:000001">
    <property type="entry name" value="50S ribosomal protein L3"/>
    <property type="match status" value="1"/>
</dbReference>
<dbReference type="Gene3D" id="3.30.160.810">
    <property type="match status" value="1"/>
</dbReference>
<dbReference type="Gene3D" id="2.40.30.10">
    <property type="entry name" value="Translation factors"/>
    <property type="match status" value="1"/>
</dbReference>
<dbReference type="HAMAP" id="MF_01325_B">
    <property type="entry name" value="Ribosomal_uL3_B"/>
    <property type="match status" value="1"/>
</dbReference>
<dbReference type="InterPro" id="IPR000597">
    <property type="entry name" value="Ribosomal_uL3"/>
</dbReference>
<dbReference type="InterPro" id="IPR019927">
    <property type="entry name" value="Ribosomal_uL3_bac/org-type"/>
</dbReference>
<dbReference type="InterPro" id="IPR019926">
    <property type="entry name" value="Ribosomal_uL3_CS"/>
</dbReference>
<dbReference type="InterPro" id="IPR009000">
    <property type="entry name" value="Transl_B-barrel_sf"/>
</dbReference>
<dbReference type="NCBIfam" id="TIGR03625">
    <property type="entry name" value="L3_bact"/>
    <property type="match status" value="1"/>
</dbReference>
<dbReference type="PANTHER" id="PTHR11229">
    <property type="entry name" value="50S RIBOSOMAL PROTEIN L3"/>
    <property type="match status" value="1"/>
</dbReference>
<dbReference type="PANTHER" id="PTHR11229:SF16">
    <property type="entry name" value="LARGE RIBOSOMAL SUBUNIT PROTEIN UL3C"/>
    <property type="match status" value="1"/>
</dbReference>
<dbReference type="Pfam" id="PF00297">
    <property type="entry name" value="Ribosomal_L3"/>
    <property type="match status" value="1"/>
</dbReference>
<dbReference type="SUPFAM" id="SSF50447">
    <property type="entry name" value="Translation proteins"/>
    <property type="match status" value="1"/>
</dbReference>
<dbReference type="PROSITE" id="PS00474">
    <property type="entry name" value="RIBOSOMAL_L3"/>
    <property type="match status" value="1"/>
</dbReference>
<protein>
    <recommendedName>
        <fullName evidence="1">Large ribosomal subunit protein uL3</fullName>
    </recommendedName>
    <alternativeName>
        <fullName evidence="3">50S ribosomal protein L3</fullName>
    </alternativeName>
</protein>
<gene>
    <name evidence="1" type="primary">rplC</name>
    <name type="ordered locus">Krad_0688</name>
</gene>
<name>RL3_KINRD</name>
<organism>
    <name type="scientific">Kineococcus radiotolerans (strain ATCC BAA-149 / DSM 14245 / SRS30216)</name>
    <dbReference type="NCBI Taxonomy" id="266940"/>
    <lineage>
        <taxon>Bacteria</taxon>
        <taxon>Bacillati</taxon>
        <taxon>Actinomycetota</taxon>
        <taxon>Actinomycetes</taxon>
        <taxon>Kineosporiales</taxon>
        <taxon>Kineosporiaceae</taxon>
        <taxon>Kineococcus</taxon>
    </lineage>
</organism>
<evidence type="ECO:0000255" key="1">
    <source>
        <dbReference type="HAMAP-Rule" id="MF_01325"/>
    </source>
</evidence>
<evidence type="ECO:0000256" key="2">
    <source>
        <dbReference type="SAM" id="MobiDB-lite"/>
    </source>
</evidence>
<evidence type="ECO:0000305" key="3"/>
<keyword id="KW-1185">Reference proteome</keyword>
<keyword id="KW-0687">Ribonucleoprotein</keyword>
<keyword id="KW-0689">Ribosomal protein</keyword>
<keyword id="KW-0694">RNA-binding</keyword>
<keyword id="KW-0699">rRNA-binding</keyword>
<accession>A6W5T8</accession>
<feature type="chain" id="PRO_1000086445" description="Large ribosomal subunit protein uL3">
    <location>
        <begin position="1"/>
        <end position="219"/>
    </location>
</feature>
<feature type="region of interest" description="Disordered" evidence="2">
    <location>
        <begin position="136"/>
        <end position="156"/>
    </location>
</feature>
<sequence>MSDRQVRGVLGTKLGMTQLWDADNRIVPVTVVKVEPNVVTQIRTTTVDGYEAVQLATTAIAQRKATKPAAGHFEKAGVAPRRHLVELRTTDAADYSLGQEVTAEAFATGATVDVVGTTKGKGFAGVMKRHGFHGVGASHGAHRNHRKPGSIGGCATPGRVFKGMRMAGRMGAARQTTQNLTVQAVDAEKGLLLITGAIPGPRGGLVLVKSASKARVKEA</sequence>
<proteinExistence type="inferred from homology"/>
<reference key="1">
    <citation type="journal article" date="2008" name="PLoS ONE">
        <title>Survival in nuclear waste, extreme resistance, and potential applications gleaned from the genome sequence of Kineococcus radiotolerans SRS30216.</title>
        <authorList>
            <person name="Bagwell C.E."/>
            <person name="Bhat S."/>
            <person name="Hawkins G.M."/>
            <person name="Smith B.W."/>
            <person name="Biswas T."/>
            <person name="Hoover T.R."/>
            <person name="Saunders E."/>
            <person name="Han C.S."/>
            <person name="Tsodikov O.V."/>
            <person name="Shimkets L.J."/>
        </authorList>
    </citation>
    <scope>NUCLEOTIDE SEQUENCE [LARGE SCALE GENOMIC DNA]</scope>
    <source>
        <strain>ATCC BAA-149 / DSM 14245 / SRS30216</strain>
    </source>
</reference>
<comment type="function">
    <text evidence="1">One of the primary rRNA binding proteins, it binds directly near the 3'-end of the 23S rRNA, where it nucleates assembly of the 50S subunit.</text>
</comment>
<comment type="subunit">
    <text evidence="1">Part of the 50S ribosomal subunit. Forms a cluster with proteins L14 and L19.</text>
</comment>
<comment type="similarity">
    <text evidence="1">Belongs to the universal ribosomal protein uL3 family.</text>
</comment>